<name>GSPG_PECCC</name>
<dbReference type="EMBL" id="X70049">
    <property type="protein sequence ID" value="CAA49648.1"/>
    <property type="molecule type" value="Genomic_DNA"/>
</dbReference>
<dbReference type="PIR" id="S32861">
    <property type="entry name" value="S32861"/>
</dbReference>
<dbReference type="SMR" id="P31586"/>
<dbReference type="GO" id="GO:0005886">
    <property type="term" value="C:plasma membrane"/>
    <property type="evidence" value="ECO:0007669"/>
    <property type="project" value="UniProtKB-SubCell"/>
</dbReference>
<dbReference type="GO" id="GO:0015627">
    <property type="term" value="C:type II protein secretion system complex"/>
    <property type="evidence" value="ECO:0007669"/>
    <property type="project" value="InterPro"/>
</dbReference>
<dbReference type="GO" id="GO:0015628">
    <property type="term" value="P:protein secretion by the type II secretion system"/>
    <property type="evidence" value="ECO:0007669"/>
    <property type="project" value="InterPro"/>
</dbReference>
<dbReference type="FunFam" id="3.30.700.10:FF:000001">
    <property type="entry name" value="General secretion pathway protein G"/>
    <property type="match status" value="1"/>
</dbReference>
<dbReference type="Gene3D" id="3.30.700.10">
    <property type="entry name" value="Glycoprotein, Type 4 Pilin"/>
    <property type="match status" value="1"/>
</dbReference>
<dbReference type="InterPro" id="IPR000983">
    <property type="entry name" value="Bac_GSPG_pilin"/>
</dbReference>
<dbReference type="InterPro" id="IPR012902">
    <property type="entry name" value="N_methyl_site"/>
</dbReference>
<dbReference type="InterPro" id="IPR045584">
    <property type="entry name" value="Pilin-like"/>
</dbReference>
<dbReference type="InterPro" id="IPR013545">
    <property type="entry name" value="T2SS_protein-GspG_C"/>
</dbReference>
<dbReference type="InterPro" id="IPR050470">
    <property type="entry name" value="T4P/T2SS_Core"/>
</dbReference>
<dbReference type="InterPro" id="IPR010054">
    <property type="entry name" value="Type2_sec_GspG"/>
</dbReference>
<dbReference type="NCBIfam" id="TIGR02532">
    <property type="entry name" value="IV_pilin_GFxxxE"/>
    <property type="match status" value="1"/>
</dbReference>
<dbReference type="NCBIfam" id="TIGR01710">
    <property type="entry name" value="typeII_sec_gspG"/>
    <property type="match status" value="1"/>
</dbReference>
<dbReference type="PANTHER" id="PTHR30093">
    <property type="entry name" value="GENERAL SECRETION PATHWAY PROTEIN G"/>
    <property type="match status" value="1"/>
</dbReference>
<dbReference type="PANTHER" id="PTHR30093:SF44">
    <property type="entry name" value="TYPE II SECRETION SYSTEM CORE PROTEIN G"/>
    <property type="match status" value="1"/>
</dbReference>
<dbReference type="Pfam" id="PF07963">
    <property type="entry name" value="N_methyl"/>
    <property type="match status" value="1"/>
</dbReference>
<dbReference type="Pfam" id="PF08334">
    <property type="entry name" value="T2SSG"/>
    <property type="match status" value="1"/>
</dbReference>
<dbReference type="PRINTS" id="PR00813">
    <property type="entry name" value="BCTERIALGSPG"/>
</dbReference>
<dbReference type="SUPFAM" id="SSF54523">
    <property type="entry name" value="Pili subunits"/>
    <property type="match status" value="1"/>
</dbReference>
<dbReference type="PROSITE" id="PS00409">
    <property type="entry name" value="PROKAR_NTER_METHYL"/>
    <property type="match status" value="1"/>
</dbReference>
<protein>
    <recommendedName>
        <fullName>Type II secretion system core protein G</fullName>
        <shortName>T2SS core protein G</shortName>
    </recommendedName>
    <alternativeName>
        <fullName>General secretion pathway protein G</fullName>
    </alternativeName>
    <alternativeName>
        <fullName>Pectic enzymes secretion protein OutG</fullName>
    </alternativeName>
</protein>
<sequence length="156" mass="17352">MQQSQRGCGQNSYGQSGYRQRGFTLLEIMVVIVILGVLASLVVPNLMGNKEKADRQKAVSDIVSLESALDMYKLDNNRYPSTEQGLKALVTKPTVQPEPRNYPADGYIRRLPQDPWGTDYQLLNPGQHGKLDIFSLGPDGMPGTEDDIGNWNLDKK</sequence>
<organism>
    <name type="scientific">Pectobacterium carotovorum subsp. carotovorum</name>
    <name type="common">Erwinia carotovora subsp. carotovora</name>
    <dbReference type="NCBI Taxonomy" id="555"/>
    <lineage>
        <taxon>Bacteria</taxon>
        <taxon>Pseudomonadati</taxon>
        <taxon>Pseudomonadota</taxon>
        <taxon>Gammaproteobacteria</taxon>
        <taxon>Enterobacterales</taxon>
        <taxon>Pectobacteriaceae</taxon>
        <taxon>Pectobacterium</taxon>
    </lineage>
</organism>
<feature type="propeptide" id="PRO_0000449506" description="Leader sequence" evidence="3">
    <location>
        <begin position="1"/>
        <end position="22"/>
    </location>
</feature>
<feature type="chain" id="PRO_0000024203" description="Type II secretion system core protein G">
    <location>
        <begin position="23"/>
        <end position="156"/>
    </location>
</feature>
<feature type="transmembrane region" description="Helical" evidence="2">
    <location>
        <begin position="23"/>
        <end position="43"/>
    </location>
</feature>
<feature type="modified residue" description="N-methylphenylalanine" evidence="3">
    <location>
        <position position="23"/>
    </location>
</feature>
<reference key="1">
    <citation type="journal article" date="1993" name="Mol. Microbiol.">
        <title>Molecular cloning and characterization of 13 out genes from Erwinia carotovora subspecies carotovora: genes encoding members of a general secretion pathway (GSP) widespread in Gram-negative bacteria.</title>
        <authorList>
            <person name="Reeves P.J."/>
            <person name="Whitcombe D."/>
            <person name="Wharam S."/>
            <person name="Gibson M."/>
            <person name="Allison G."/>
            <person name="Bunce N."/>
            <person name="Barallon R."/>
            <person name="Douglas P."/>
            <person name="Mulholland V."/>
            <person name="Stevens S."/>
            <person name="Walker S."/>
            <person name="Salmond G.P.C."/>
        </authorList>
    </citation>
    <scope>NUCLEOTIDE SEQUENCE [GENOMIC DNA]</scope>
    <source>
        <strain>SCRI 193</strain>
    </source>
</reference>
<gene>
    <name type="primary">outG</name>
</gene>
<accession>P31586</accession>
<proteinExistence type="inferred from homology"/>
<evidence type="ECO:0000250" key="1">
    <source>
        <dbReference type="UniProtKB" id="Q00514"/>
    </source>
</evidence>
<evidence type="ECO:0000255" key="2"/>
<evidence type="ECO:0000255" key="3">
    <source>
        <dbReference type="PROSITE-ProRule" id="PRU01070"/>
    </source>
</evidence>
<evidence type="ECO:0000305" key="4"/>
<keyword id="KW-0997">Cell inner membrane</keyword>
<keyword id="KW-1003">Cell membrane</keyword>
<keyword id="KW-0472">Membrane</keyword>
<keyword id="KW-0488">Methylation</keyword>
<keyword id="KW-0653">Protein transport</keyword>
<keyword id="KW-0812">Transmembrane</keyword>
<keyword id="KW-1133">Transmembrane helix</keyword>
<keyword id="KW-0813">Transport</keyword>
<comment type="function">
    <text evidence="1">Core component of the type II secretion system required for the energy-dependent secretion of extracellular factors such as proteases and toxins from the periplasm. Pseudopilin (pilin-like) protein that polymerizes to form the pseudopilus. Further polymerization triggers pseudopilus growth.</text>
</comment>
<comment type="subunit">
    <text evidence="1">Type II secretion system is composed of four main components: the outer membrane complex, the inner membrane complex, the cytoplasmic secretion ATPase and the periplasm-spanning pseudopilus. Forms homomultimers.</text>
</comment>
<comment type="subcellular location">
    <subcellularLocation>
        <location evidence="1">Cell inner membrane</location>
        <topology evidence="2">Single-pass membrane protein</topology>
    </subcellularLocation>
</comment>
<comment type="PTM">
    <text evidence="1">Cleaved by the prepilin peptidase.</text>
</comment>
<comment type="PTM">
    <text evidence="1">Methylated by prepilin peptidase at the amino group of the N-terminal phenylalanine once the leader sequence is cleaved.</text>
</comment>
<comment type="similarity">
    <text evidence="4">Belongs to the GSP G family.</text>
</comment>